<accession>A4QJJ7</accession>
<gene>
    <name evidence="1" type="primary">rps14</name>
</gene>
<evidence type="ECO:0000255" key="1">
    <source>
        <dbReference type="HAMAP-Rule" id="MF_00537"/>
    </source>
</evidence>
<evidence type="ECO:0000305" key="2"/>
<feature type="chain" id="PRO_0000354396" description="Small ribosomal subunit protein uS14c">
    <location>
        <begin position="1"/>
        <end position="100"/>
    </location>
</feature>
<geneLocation type="chloroplast"/>
<organism>
    <name type="scientific">Aethionema grandiflorum</name>
    <name type="common">Persian stone-cress</name>
    <dbReference type="NCBI Taxonomy" id="72657"/>
    <lineage>
        <taxon>Eukaryota</taxon>
        <taxon>Viridiplantae</taxon>
        <taxon>Streptophyta</taxon>
        <taxon>Embryophyta</taxon>
        <taxon>Tracheophyta</taxon>
        <taxon>Spermatophyta</taxon>
        <taxon>Magnoliopsida</taxon>
        <taxon>eudicotyledons</taxon>
        <taxon>Gunneridae</taxon>
        <taxon>Pentapetalae</taxon>
        <taxon>rosids</taxon>
        <taxon>malvids</taxon>
        <taxon>Brassicales</taxon>
        <taxon>Brassicaceae</taxon>
        <taxon>Aethionemeae</taxon>
        <taxon>Aethionema</taxon>
    </lineage>
</organism>
<proteinExistence type="inferred from homology"/>
<comment type="function">
    <text evidence="1">Binds 16S rRNA, required for the assembly of 30S particles.</text>
</comment>
<comment type="subunit">
    <text evidence="1">Part of the 30S ribosomal subunit.</text>
</comment>
<comment type="subcellular location">
    <subcellularLocation>
        <location>Plastid</location>
        <location>Chloroplast</location>
    </subcellularLocation>
</comment>
<comment type="similarity">
    <text evidence="1">Belongs to the universal ribosomal protein uS14 family.</text>
</comment>
<protein>
    <recommendedName>
        <fullName evidence="1">Small ribosomal subunit protein uS14c</fullName>
    </recommendedName>
    <alternativeName>
        <fullName evidence="2">30S ribosomal protein S14, chloroplastic</fullName>
    </alternativeName>
</protein>
<dbReference type="EMBL" id="AP009367">
    <property type="protein sequence ID" value="BAF49852.1"/>
    <property type="molecule type" value="Genomic_DNA"/>
</dbReference>
<dbReference type="RefSeq" id="YP_001123028.1">
    <property type="nucleotide sequence ID" value="NC_009266.1"/>
</dbReference>
<dbReference type="SMR" id="A4QJJ7"/>
<dbReference type="GeneID" id="4962231"/>
<dbReference type="GO" id="GO:0009507">
    <property type="term" value="C:chloroplast"/>
    <property type="evidence" value="ECO:0007669"/>
    <property type="project" value="UniProtKB-SubCell"/>
</dbReference>
<dbReference type="GO" id="GO:0015935">
    <property type="term" value="C:small ribosomal subunit"/>
    <property type="evidence" value="ECO:0007669"/>
    <property type="project" value="TreeGrafter"/>
</dbReference>
<dbReference type="GO" id="GO:0019843">
    <property type="term" value="F:rRNA binding"/>
    <property type="evidence" value="ECO:0007669"/>
    <property type="project" value="UniProtKB-UniRule"/>
</dbReference>
<dbReference type="GO" id="GO:0003735">
    <property type="term" value="F:structural constituent of ribosome"/>
    <property type="evidence" value="ECO:0007669"/>
    <property type="project" value="InterPro"/>
</dbReference>
<dbReference type="GO" id="GO:0006412">
    <property type="term" value="P:translation"/>
    <property type="evidence" value="ECO:0007669"/>
    <property type="project" value="UniProtKB-UniRule"/>
</dbReference>
<dbReference type="FunFam" id="1.10.287.1480:FF:000001">
    <property type="entry name" value="30S ribosomal protein S14"/>
    <property type="match status" value="1"/>
</dbReference>
<dbReference type="Gene3D" id="1.10.287.1480">
    <property type="match status" value="1"/>
</dbReference>
<dbReference type="HAMAP" id="MF_00537">
    <property type="entry name" value="Ribosomal_uS14_1"/>
    <property type="match status" value="1"/>
</dbReference>
<dbReference type="InterPro" id="IPR001209">
    <property type="entry name" value="Ribosomal_uS14"/>
</dbReference>
<dbReference type="InterPro" id="IPR023036">
    <property type="entry name" value="Ribosomal_uS14_bac/plastid"/>
</dbReference>
<dbReference type="InterPro" id="IPR018271">
    <property type="entry name" value="Ribosomal_uS14_CS"/>
</dbReference>
<dbReference type="NCBIfam" id="NF006477">
    <property type="entry name" value="PRK08881.1"/>
    <property type="match status" value="1"/>
</dbReference>
<dbReference type="PANTHER" id="PTHR19836">
    <property type="entry name" value="30S RIBOSOMAL PROTEIN S14"/>
    <property type="match status" value="1"/>
</dbReference>
<dbReference type="PANTHER" id="PTHR19836:SF19">
    <property type="entry name" value="SMALL RIBOSOMAL SUBUNIT PROTEIN US14M"/>
    <property type="match status" value="1"/>
</dbReference>
<dbReference type="Pfam" id="PF00253">
    <property type="entry name" value="Ribosomal_S14"/>
    <property type="match status" value="1"/>
</dbReference>
<dbReference type="SUPFAM" id="SSF57716">
    <property type="entry name" value="Glucocorticoid receptor-like (DNA-binding domain)"/>
    <property type="match status" value="1"/>
</dbReference>
<dbReference type="PROSITE" id="PS00527">
    <property type="entry name" value="RIBOSOMAL_S14"/>
    <property type="match status" value="1"/>
</dbReference>
<reference key="1">
    <citation type="submission" date="2007-03" db="EMBL/GenBank/DDBJ databases">
        <title>Sequencing analysis of Aethionema grandiflorum chloroplast DNA.</title>
        <authorList>
            <person name="Hosouchi T."/>
            <person name="Tsuruoka H."/>
            <person name="Kotani H."/>
        </authorList>
    </citation>
    <scope>NUCLEOTIDE SEQUENCE [LARGE SCALE GENOMIC DNA]</scope>
</reference>
<name>RR14_AETGR</name>
<keyword id="KW-0150">Chloroplast</keyword>
<keyword id="KW-0934">Plastid</keyword>
<keyword id="KW-0687">Ribonucleoprotein</keyword>
<keyword id="KW-0689">Ribosomal protein</keyword>
<keyword id="KW-0694">RNA-binding</keyword>
<keyword id="KW-0699">rRNA-binding</keyword>
<sequence>MAKKSLIYREKKRQKLEEKYHLIRRSSKKEISQIPSLSEKWKIHGKLQSPPRNSAPTRLHRRCFSTGRPRANYRDFGLSGHILREMVHACLLPGATRSSW</sequence>